<gene>
    <name evidence="1" type="primary">eno</name>
    <name type="ordered locus">Sbal_3127</name>
</gene>
<accession>A3D795</accession>
<keyword id="KW-0963">Cytoplasm</keyword>
<keyword id="KW-0324">Glycolysis</keyword>
<keyword id="KW-0456">Lyase</keyword>
<keyword id="KW-0460">Magnesium</keyword>
<keyword id="KW-0479">Metal-binding</keyword>
<keyword id="KW-1185">Reference proteome</keyword>
<keyword id="KW-0964">Secreted</keyword>
<proteinExistence type="inferred from homology"/>
<evidence type="ECO:0000255" key="1">
    <source>
        <dbReference type="HAMAP-Rule" id="MF_00318"/>
    </source>
</evidence>
<feature type="chain" id="PRO_1000019245" description="Enolase">
    <location>
        <begin position="1"/>
        <end position="431"/>
    </location>
</feature>
<feature type="active site" description="Proton donor" evidence="1">
    <location>
        <position position="209"/>
    </location>
</feature>
<feature type="active site" description="Proton acceptor" evidence="1">
    <location>
        <position position="341"/>
    </location>
</feature>
<feature type="binding site" evidence="1">
    <location>
        <position position="167"/>
    </location>
    <ligand>
        <name>(2R)-2-phosphoglycerate</name>
        <dbReference type="ChEBI" id="CHEBI:58289"/>
    </ligand>
</feature>
<feature type="binding site" evidence="1">
    <location>
        <position position="246"/>
    </location>
    <ligand>
        <name>Mg(2+)</name>
        <dbReference type="ChEBI" id="CHEBI:18420"/>
    </ligand>
</feature>
<feature type="binding site" evidence="1">
    <location>
        <position position="289"/>
    </location>
    <ligand>
        <name>Mg(2+)</name>
        <dbReference type="ChEBI" id="CHEBI:18420"/>
    </ligand>
</feature>
<feature type="binding site" evidence="1">
    <location>
        <position position="316"/>
    </location>
    <ligand>
        <name>Mg(2+)</name>
        <dbReference type="ChEBI" id="CHEBI:18420"/>
    </ligand>
</feature>
<feature type="binding site" evidence="1">
    <location>
        <position position="341"/>
    </location>
    <ligand>
        <name>(2R)-2-phosphoglycerate</name>
        <dbReference type="ChEBI" id="CHEBI:58289"/>
    </ligand>
</feature>
<feature type="binding site" evidence="1">
    <location>
        <position position="370"/>
    </location>
    <ligand>
        <name>(2R)-2-phosphoglycerate</name>
        <dbReference type="ChEBI" id="CHEBI:58289"/>
    </ligand>
</feature>
<feature type="binding site" evidence="1">
    <location>
        <position position="371"/>
    </location>
    <ligand>
        <name>(2R)-2-phosphoglycerate</name>
        <dbReference type="ChEBI" id="CHEBI:58289"/>
    </ligand>
</feature>
<feature type="binding site" evidence="1">
    <location>
        <position position="392"/>
    </location>
    <ligand>
        <name>(2R)-2-phosphoglycerate</name>
        <dbReference type="ChEBI" id="CHEBI:58289"/>
    </ligand>
</feature>
<protein>
    <recommendedName>
        <fullName evidence="1">Enolase</fullName>
        <ecNumber evidence="1">4.2.1.11</ecNumber>
    </recommendedName>
    <alternativeName>
        <fullName evidence="1">2-phospho-D-glycerate hydro-lyase</fullName>
    </alternativeName>
    <alternativeName>
        <fullName evidence="1">2-phosphoglycerate dehydratase</fullName>
    </alternativeName>
</protein>
<dbReference type="EC" id="4.2.1.11" evidence="1"/>
<dbReference type="EMBL" id="CP000563">
    <property type="protein sequence ID" value="ABN62608.1"/>
    <property type="molecule type" value="Genomic_DNA"/>
</dbReference>
<dbReference type="RefSeq" id="WP_006082616.1">
    <property type="nucleotide sequence ID" value="NC_009052.1"/>
</dbReference>
<dbReference type="SMR" id="A3D795"/>
<dbReference type="STRING" id="325240.Sbal_3127"/>
<dbReference type="GeneID" id="11773332"/>
<dbReference type="KEGG" id="sbl:Sbal_3127"/>
<dbReference type="HOGENOM" id="CLU_031223_2_1_6"/>
<dbReference type="OrthoDB" id="9804716at2"/>
<dbReference type="UniPathway" id="UPA00109">
    <property type="reaction ID" value="UER00187"/>
</dbReference>
<dbReference type="Proteomes" id="UP000001557">
    <property type="component" value="Chromosome"/>
</dbReference>
<dbReference type="GO" id="GO:0009986">
    <property type="term" value="C:cell surface"/>
    <property type="evidence" value="ECO:0007669"/>
    <property type="project" value="UniProtKB-SubCell"/>
</dbReference>
<dbReference type="GO" id="GO:0005576">
    <property type="term" value="C:extracellular region"/>
    <property type="evidence" value="ECO:0007669"/>
    <property type="project" value="UniProtKB-SubCell"/>
</dbReference>
<dbReference type="GO" id="GO:0000015">
    <property type="term" value="C:phosphopyruvate hydratase complex"/>
    <property type="evidence" value="ECO:0007669"/>
    <property type="project" value="InterPro"/>
</dbReference>
<dbReference type="GO" id="GO:0000287">
    <property type="term" value="F:magnesium ion binding"/>
    <property type="evidence" value="ECO:0007669"/>
    <property type="project" value="UniProtKB-UniRule"/>
</dbReference>
<dbReference type="GO" id="GO:0004634">
    <property type="term" value="F:phosphopyruvate hydratase activity"/>
    <property type="evidence" value="ECO:0007669"/>
    <property type="project" value="UniProtKB-UniRule"/>
</dbReference>
<dbReference type="GO" id="GO:0006096">
    <property type="term" value="P:glycolytic process"/>
    <property type="evidence" value="ECO:0007669"/>
    <property type="project" value="UniProtKB-UniRule"/>
</dbReference>
<dbReference type="CDD" id="cd03313">
    <property type="entry name" value="enolase"/>
    <property type="match status" value="1"/>
</dbReference>
<dbReference type="FunFam" id="3.20.20.120:FF:000001">
    <property type="entry name" value="Enolase"/>
    <property type="match status" value="1"/>
</dbReference>
<dbReference type="FunFam" id="3.30.390.10:FF:000001">
    <property type="entry name" value="Enolase"/>
    <property type="match status" value="1"/>
</dbReference>
<dbReference type="Gene3D" id="3.20.20.120">
    <property type="entry name" value="Enolase-like C-terminal domain"/>
    <property type="match status" value="1"/>
</dbReference>
<dbReference type="Gene3D" id="3.30.390.10">
    <property type="entry name" value="Enolase-like, N-terminal domain"/>
    <property type="match status" value="1"/>
</dbReference>
<dbReference type="HAMAP" id="MF_00318">
    <property type="entry name" value="Enolase"/>
    <property type="match status" value="1"/>
</dbReference>
<dbReference type="InterPro" id="IPR000941">
    <property type="entry name" value="Enolase"/>
</dbReference>
<dbReference type="InterPro" id="IPR036849">
    <property type="entry name" value="Enolase-like_C_sf"/>
</dbReference>
<dbReference type="InterPro" id="IPR029017">
    <property type="entry name" value="Enolase-like_N"/>
</dbReference>
<dbReference type="InterPro" id="IPR020810">
    <property type="entry name" value="Enolase_C"/>
</dbReference>
<dbReference type="InterPro" id="IPR020809">
    <property type="entry name" value="Enolase_CS"/>
</dbReference>
<dbReference type="InterPro" id="IPR020811">
    <property type="entry name" value="Enolase_N"/>
</dbReference>
<dbReference type="NCBIfam" id="TIGR01060">
    <property type="entry name" value="eno"/>
    <property type="match status" value="1"/>
</dbReference>
<dbReference type="PANTHER" id="PTHR11902">
    <property type="entry name" value="ENOLASE"/>
    <property type="match status" value="1"/>
</dbReference>
<dbReference type="PANTHER" id="PTHR11902:SF1">
    <property type="entry name" value="ENOLASE"/>
    <property type="match status" value="1"/>
</dbReference>
<dbReference type="Pfam" id="PF00113">
    <property type="entry name" value="Enolase_C"/>
    <property type="match status" value="1"/>
</dbReference>
<dbReference type="Pfam" id="PF03952">
    <property type="entry name" value="Enolase_N"/>
    <property type="match status" value="1"/>
</dbReference>
<dbReference type="PIRSF" id="PIRSF001400">
    <property type="entry name" value="Enolase"/>
    <property type="match status" value="1"/>
</dbReference>
<dbReference type="PRINTS" id="PR00148">
    <property type="entry name" value="ENOLASE"/>
</dbReference>
<dbReference type="SFLD" id="SFLDS00001">
    <property type="entry name" value="Enolase"/>
    <property type="match status" value="1"/>
</dbReference>
<dbReference type="SFLD" id="SFLDF00002">
    <property type="entry name" value="enolase"/>
    <property type="match status" value="1"/>
</dbReference>
<dbReference type="SMART" id="SM01192">
    <property type="entry name" value="Enolase_C"/>
    <property type="match status" value="1"/>
</dbReference>
<dbReference type="SMART" id="SM01193">
    <property type="entry name" value="Enolase_N"/>
    <property type="match status" value="1"/>
</dbReference>
<dbReference type="SUPFAM" id="SSF51604">
    <property type="entry name" value="Enolase C-terminal domain-like"/>
    <property type="match status" value="1"/>
</dbReference>
<dbReference type="SUPFAM" id="SSF54826">
    <property type="entry name" value="Enolase N-terminal domain-like"/>
    <property type="match status" value="1"/>
</dbReference>
<dbReference type="PROSITE" id="PS00164">
    <property type="entry name" value="ENOLASE"/>
    <property type="match status" value="1"/>
</dbReference>
<comment type="function">
    <text evidence="1">Catalyzes the reversible conversion of 2-phosphoglycerate (2-PG) into phosphoenolpyruvate (PEP). It is essential for the degradation of carbohydrates via glycolysis.</text>
</comment>
<comment type="catalytic activity">
    <reaction evidence="1">
        <text>(2R)-2-phosphoglycerate = phosphoenolpyruvate + H2O</text>
        <dbReference type="Rhea" id="RHEA:10164"/>
        <dbReference type="ChEBI" id="CHEBI:15377"/>
        <dbReference type="ChEBI" id="CHEBI:58289"/>
        <dbReference type="ChEBI" id="CHEBI:58702"/>
        <dbReference type="EC" id="4.2.1.11"/>
    </reaction>
</comment>
<comment type="cofactor">
    <cofactor evidence="1">
        <name>Mg(2+)</name>
        <dbReference type="ChEBI" id="CHEBI:18420"/>
    </cofactor>
    <text evidence="1">Binds a second Mg(2+) ion via substrate during catalysis.</text>
</comment>
<comment type="pathway">
    <text evidence="1">Carbohydrate degradation; glycolysis; pyruvate from D-glyceraldehyde 3-phosphate: step 4/5.</text>
</comment>
<comment type="subunit">
    <text evidence="1">Component of the RNA degradosome, a multiprotein complex involved in RNA processing and mRNA degradation.</text>
</comment>
<comment type="subcellular location">
    <subcellularLocation>
        <location evidence="1">Cytoplasm</location>
    </subcellularLocation>
    <subcellularLocation>
        <location evidence="1">Secreted</location>
    </subcellularLocation>
    <subcellularLocation>
        <location evidence="1">Cell surface</location>
    </subcellularLocation>
    <text evidence="1">Fractions of enolase are present in both the cytoplasm and on the cell surface.</text>
</comment>
<comment type="similarity">
    <text evidence="1">Belongs to the enolase family.</text>
</comment>
<reference key="1">
    <citation type="submission" date="2007-02" db="EMBL/GenBank/DDBJ databases">
        <title>Complete sequence of chromosome of Shewanella baltica OS155.</title>
        <authorList>
            <consortium name="US DOE Joint Genome Institute"/>
            <person name="Copeland A."/>
            <person name="Lucas S."/>
            <person name="Lapidus A."/>
            <person name="Barry K."/>
            <person name="Detter J.C."/>
            <person name="Glavina del Rio T."/>
            <person name="Hammon N."/>
            <person name="Israni S."/>
            <person name="Dalin E."/>
            <person name="Tice H."/>
            <person name="Pitluck S."/>
            <person name="Sims D.R."/>
            <person name="Brettin T."/>
            <person name="Bruce D."/>
            <person name="Han C."/>
            <person name="Tapia R."/>
            <person name="Brainard J."/>
            <person name="Schmutz J."/>
            <person name="Larimer F."/>
            <person name="Land M."/>
            <person name="Hauser L."/>
            <person name="Kyrpides N."/>
            <person name="Mikhailova N."/>
            <person name="Brettar I."/>
            <person name="Klappenbach J."/>
            <person name="Konstantinidis K."/>
            <person name="Rodrigues J."/>
            <person name="Tiedje J."/>
            <person name="Richardson P."/>
        </authorList>
    </citation>
    <scope>NUCLEOTIDE SEQUENCE [LARGE SCALE GENOMIC DNA]</scope>
    <source>
        <strain>OS155 / ATCC BAA-1091</strain>
    </source>
</reference>
<organism>
    <name type="scientific">Shewanella baltica (strain OS155 / ATCC BAA-1091)</name>
    <dbReference type="NCBI Taxonomy" id="325240"/>
    <lineage>
        <taxon>Bacteria</taxon>
        <taxon>Pseudomonadati</taxon>
        <taxon>Pseudomonadota</taxon>
        <taxon>Gammaproteobacteria</taxon>
        <taxon>Alteromonadales</taxon>
        <taxon>Shewanellaceae</taxon>
        <taxon>Shewanella</taxon>
    </lineage>
</organism>
<sequence length="431" mass="45818">MAKIINVIGREIMDSRGNPTVEAEVHLEGGFVGMAAAPSGASTGSREALELRDGDKSRYLGKGVLTAVANVNDLIRTALLGKDATAQAELDQIMIDLDGTENKDKLGANAILAVSLAAAKAAAAFKGIPLYAHIAELNGTPGQYSMPVPMMNILNGGEHADNNVDIQEFMVQPVGAKTFREALRMGAEIFHTLKKVLHDKGLSTSVGDEGGFAPNLASNADALAIIKEAVELAGYKLGTDVTLALDCAASEFYKDGKYDLAGEGKVFDSNGFSDFLKSLADQYPIVSIEDGLDESDWDGWAYQTQIMGDKIQLVGDDLFVTNTKILTRGIENGIANSILIKFNQIGSLTETLAAIRMAKEAGYTAVISHRSGETEDSTIADLAVGTAAGQIKTGSLCRSDRVAKYNQLLRIEEQLGEKAPYRGLKEIKGQA</sequence>
<name>ENO_SHEB5</name>